<keyword id="KW-0165">Cleavage on pair of basic residues</keyword>
<keyword id="KW-1015">Disulfide bond</keyword>
<keyword id="KW-0372">Hormone</keyword>
<keyword id="KW-1185">Reference proteome</keyword>
<keyword id="KW-0964">Secreted</keyword>
<keyword id="KW-0732">Signal</keyword>
<accession>Q9MYK8</accession>
<comment type="function">
    <text evidence="1">Relaxin is an ovarian hormone that acts with estrogen to produce dilatation of the birth canal in many mammals.</text>
</comment>
<comment type="subunit">
    <text evidence="1">Heterodimer of a B chain and an A chain linked by two disulfide bonds.</text>
</comment>
<comment type="subcellular location">
    <subcellularLocation>
        <location evidence="1">Secreted</location>
    </subcellularLocation>
</comment>
<comment type="tissue specificity">
    <text evidence="2">Expressed by the placenta. Exclusively detected in cells located in the lamellar placental labyrinth and absent from other placental and non-placental uterine parts.</text>
</comment>
<comment type="similarity">
    <text evidence="3">Belongs to the insulin family.</text>
</comment>
<protein>
    <recommendedName>
        <fullName>Prorelaxin</fullName>
        <shortName>RXN</shortName>
    </recommendedName>
    <component>
        <recommendedName>
            <fullName>Relaxin B chain</fullName>
        </recommendedName>
    </component>
    <component>
        <recommendedName>
            <fullName>Relaxin A chain</fullName>
        </recommendedName>
    </component>
</protein>
<gene>
    <name type="primary">RLN</name>
</gene>
<organism>
    <name type="scientific">Felis catus</name>
    <name type="common">Cat</name>
    <name type="synonym">Felis silvestris catus</name>
    <dbReference type="NCBI Taxonomy" id="9685"/>
    <lineage>
        <taxon>Eukaryota</taxon>
        <taxon>Metazoa</taxon>
        <taxon>Chordata</taxon>
        <taxon>Craniata</taxon>
        <taxon>Vertebrata</taxon>
        <taxon>Euteleostomi</taxon>
        <taxon>Mammalia</taxon>
        <taxon>Eutheria</taxon>
        <taxon>Laurasiatheria</taxon>
        <taxon>Carnivora</taxon>
        <taxon>Feliformia</taxon>
        <taxon>Felidae</taxon>
        <taxon>Felinae</taxon>
        <taxon>Felis</taxon>
    </lineage>
</organism>
<proteinExistence type="evidence at transcript level"/>
<sequence length="180" mass="20360">MLRLFLSHLLGVWLLLSLRARKIPAQEEVLKACGREFVRLQIRICGSLSWGKSSQQHREPRQAPAALPEIVSSSITSGAEALNGMLEYIPDLPQELKATLSEREPSFRELQPSLKDSNLNLEEVEKSILGRQNEAEDQSLSQLGRSRLDAHSRIKRSDYIRYSDRCCNVGCTRKELADLC</sequence>
<evidence type="ECO:0000250" key="1"/>
<evidence type="ECO:0000269" key="2">
    <source>
    </source>
</evidence>
<evidence type="ECO:0000305" key="3"/>
<feature type="signal peptide" evidence="1">
    <location>
        <begin position="1"/>
        <end position="25"/>
    </location>
</feature>
<feature type="peptide" id="PRO_0000250468" description="Relaxin B chain" evidence="1">
    <location>
        <begin position="26"/>
        <end position="51"/>
    </location>
</feature>
<feature type="propeptide" id="PRO_0000250469" description="Connecting peptide" evidence="1">
    <location>
        <begin position="53"/>
        <end position="154"/>
    </location>
</feature>
<feature type="peptide" id="PRO_0000250470" description="Relaxin A chain" evidence="1">
    <location>
        <begin position="157"/>
        <end position="180"/>
    </location>
</feature>
<feature type="disulfide bond" description="Interchain (between B and A chains)" evidence="1">
    <location>
        <begin position="33"/>
        <end position="167"/>
    </location>
</feature>
<feature type="disulfide bond" description="Interchain (between B and A chains)" evidence="1">
    <location>
        <begin position="45"/>
        <end position="180"/>
    </location>
</feature>
<feature type="disulfide bond" evidence="1">
    <location>
        <begin position="166"/>
        <end position="171"/>
    </location>
</feature>
<name>RELX_FELCA</name>
<dbReference type="EMBL" id="AF233688">
    <property type="protein sequence ID" value="AAF60303.1"/>
    <property type="molecule type" value="mRNA"/>
</dbReference>
<dbReference type="RefSeq" id="NP_001009317.1">
    <property type="nucleotide sequence ID" value="NM_001009317.1"/>
</dbReference>
<dbReference type="SMR" id="Q9MYK8"/>
<dbReference type="FunCoup" id="Q9MYK8">
    <property type="interactions" value="6"/>
</dbReference>
<dbReference type="STRING" id="9685.ENSFCAP00000010657"/>
<dbReference type="PaxDb" id="9685-ENSFCAP00000010657"/>
<dbReference type="GeneID" id="493883"/>
<dbReference type="KEGG" id="fca:493883"/>
<dbReference type="CTD" id="100329416"/>
<dbReference type="eggNOG" id="ENOG502TH8D">
    <property type="taxonomic scope" value="Eukaryota"/>
</dbReference>
<dbReference type="InParanoid" id="Q9MYK8"/>
<dbReference type="OrthoDB" id="8784777at2759"/>
<dbReference type="TreeFam" id="TF333404"/>
<dbReference type="Proteomes" id="UP000011712">
    <property type="component" value="Unplaced"/>
</dbReference>
<dbReference type="GO" id="GO:0005576">
    <property type="term" value="C:extracellular region"/>
    <property type="evidence" value="ECO:0007669"/>
    <property type="project" value="UniProtKB-SubCell"/>
</dbReference>
<dbReference type="GO" id="GO:0005179">
    <property type="term" value="F:hormone activity"/>
    <property type="evidence" value="ECO:0007669"/>
    <property type="project" value="UniProtKB-KW"/>
</dbReference>
<dbReference type="CDD" id="cd04365">
    <property type="entry name" value="IlGF_relaxin_like"/>
    <property type="match status" value="1"/>
</dbReference>
<dbReference type="InterPro" id="IPR016179">
    <property type="entry name" value="Insulin-like"/>
</dbReference>
<dbReference type="InterPro" id="IPR036438">
    <property type="entry name" value="Insulin-like_sf"/>
</dbReference>
<dbReference type="InterPro" id="IPR022353">
    <property type="entry name" value="Insulin_CS"/>
</dbReference>
<dbReference type="InterPro" id="IPR022421">
    <property type="entry name" value="Relaxin"/>
</dbReference>
<dbReference type="InterPro" id="IPR051042">
    <property type="entry name" value="Repro_Hormone_Insulin-like"/>
</dbReference>
<dbReference type="PANTHER" id="PTHR12004:SF13">
    <property type="entry name" value="PRORELAXIN H2"/>
    <property type="match status" value="1"/>
</dbReference>
<dbReference type="PANTHER" id="PTHR12004">
    <property type="entry name" value="RELAXIN"/>
    <property type="match status" value="1"/>
</dbReference>
<dbReference type="Pfam" id="PF00049">
    <property type="entry name" value="Insulin"/>
    <property type="match status" value="1"/>
</dbReference>
<dbReference type="PRINTS" id="PR02004">
    <property type="entry name" value="RELAXIN"/>
</dbReference>
<dbReference type="SMART" id="SM00078">
    <property type="entry name" value="IlGF"/>
    <property type="match status" value="1"/>
</dbReference>
<dbReference type="SUPFAM" id="SSF56994">
    <property type="entry name" value="Insulin-like"/>
    <property type="match status" value="1"/>
</dbReference>
<dbReference type="PROSITE" id="PS00262">
    <property type="entry name" value="INSULIN"/>
    <property type="match status" value="1"/>
</dbReference>
<reference key="1">
    <citation type="journal article" date="1999" name="Biol. Reprod.">
        <title>Nucleic acid sequence of feline preprorelaxin and its localization within the feline placenta.</title>
        <authorList>
            <person name="Klonisch T."/>
            <person name="Hombach-Klonisch S."/>
            <person name="Froehlich C."/>
            <person name="Kauffold J."/>
            <person name="Steger K."/>
            <person name="Huppertz B."/>
            <person name="Fischer B."/>
        </authorList>
    </citation>
    <scope>NUCLEOTIDE SEQUENCE [MRNA]</scope>
    <scope>TISSUE SPECIFICITY</scope>
    <source>
        <tissue>Placenta</tissue>
    </source>
</reference>